<organism>
    <name type="scientific">Salmonella typhimurium (strain LT2 / SGSC1412 / ATCC 700720)</name>
    <dbReference type="NCBI Taxonomy" id="99287"/>
    <lineage>
        <taxon>Bacteria</taxon>
        <taxon>Pseudomonadati</taxon>
        <taxon>Pseudomonadota</taxon>
        <taxon>Gammaproteobacteria</taxon>
        <taxon>Enterobacterales</taxon>
        <taxon>Enterobacteriaceae</taxon>
        <taxon>Salmonella</taxon>
    </lineage>
</organism>
<dbReference type="EMBL" id="AE006468">
    <property type="protein sequence ID" value="AAL19389.1"/>
    <property type="status" value="ALT_INIT"/>
    <property type="molecule type" value="Genomic_DNA"/>
</dbReference>
<dbReference type="RefSeq" id="NP_459430.3">
    <property type="nucleotide sequence ID" value="NC_003197.2"/>
</dbReference>
<dbReference type="PDB" id="8K4I">
    <property type="method" value="X-ray"/>
    <property type="resolution" value="1.48 A"/>
    <property type="chains" value="A=1-163"/>
</dbReference>
<dbReference type="PDB" id="8K5Q">
    <property type="method" value="X-ray"/>
    <property type="resolution" value="2.28 A"/>
    <property type="chains" value="A=1-163"/>
</dbReference>
<dbReference type="PDBsum" id="8K4I"/>
<dbReference type="PDBsum" id="8K5Q"/>
<dbReference type="SMR" id="Q8ZRC9"/>
<dbReference type="STRING" id="99287.STM0435"/>
<dbReference type="PaxDb" id="99287-STM0435"/>
<dbReference type="GeneID" id="1251954"/>
<dbReference type="KEGG" id="stm:STM0435"/>
<dbReference type="PATRIC" id="fig|99287.12.peg.464"/>
<dbReference type="HOGENOM" id="CLU_099839_1_0_6"/>
<dbReference type="OMA" id="DFKGVGA"/>
<dbReference type="PhylomeDB" id="Q8ZRC9"/>
<dbReference type="Proteomes" id="UP000001014">
    <property type="component" value="Chromosome"/>
</dbReference>
<dbReference type="GO" id="GO:0005829">
    <property type="term" value="C:cytosol"/>
    <property type="evidence" value="ECO:0000318"/>
    <property type="project" value="GO_Central"/>
</dbReference>
<dbReference type="GO" id="GO:0000166">
    <property type="term" value="F:nucleotide binding"/>
    <property type="evidence" value="ECO:0000318"/>
    <property type="project" value="GO_Central"/>
</dbReference>
<dbReference type="CDD" id="cd11740">
    <property type="entry name" value="YajQ_like"/>
    <property type="match status" value="1"/>
</dbReference>
<dbReference type="FunFam" id="3.30.70.860:FF:000001">
    <property type="entry name" value="UPF0234 protein YajQ"/>
    <property type="match status" value="1"/>
</dbReference>
<dbReference type="FunFam" id="3.30.70.990:FF:000001">
    <property type="entry name" value="UPF0234 protein YajQ"/>
    <property type="match status" value="1"/>
</dbReference>
<dbReference type="Gene3D" id="3.30.70.860">
    <property type="match status" value="1"/>
</dbReference>
<dbReference type="Gene3D" id="3.30.70.990">
    <property type="entry name" value="YajQ-like, domain 2"/>
    <property type="match status" value="1"/>
</dbReference>
<dbReference type="HAMAP" id="MF_00632">
    <property type="entry name" value="YajQ"/>
    <property type="match status" value="1"/>
</dbReference>
<dbReference type="InterPro" id="IPR007551">
    <property type="entry name" value="DUF520"/>
</dbReference>
<dbReference type="InterPro" id="IPR035571">
    <property type="entry name" value="UPF0234-like_C"/>
</dbReference>
<dbReference type="InterPro" id="IPR035570">
    <property type="entry name" value="UPF0234_N"/>
</dbReference>
<dbReference type="InterPro" id="IPR036183">
    <property type="entry name" value="YajQ-like_sf"/>
</dbReference>
<dbReference type="NCBIfam" id="NF003819">
    <property type="entry name" value="PRK05412.1"/>
    <property type="match status" value="1"/>
</dbReference>
<dbReference type="PANTHER" id="PTHR30476">
    <property type="entry name" value="UPF0234 PROTEIN YAJQ"/>
    <property type="match status" value="1"/>
</dbReference>
<dbReference type="PANTHER" id="PTHR30476:SF0">
    <property type="entry name" value="UPF0234 PROTEIN YAJQ"/>
    <property type="match status" value="1"/>
</dbReference>
<dbReference type="Pfam" id="PF04461">
    <property type="entry name" value="DUF520"/>
    <property type="match status" value="1"/>
</dbReference>
<dbReference type="SUPFAM" id="SSF89963">
    <property type="entry name" value="YajQ-like"/>
    <property type="match status" value="2"/>
</dbReference>
<sequence length="163" mass="18319">MPSFDIVSEVDLQEARNGVDNAVREVESRFDFRGVEATIELNDANKTIKVLSESDFQVNQLLDILRAKLLKRGIEGASLDVPDEFVHSGKTWYVEAKLKQGIESAVQKKIVKLIKDSKLKVQAQIQGEEIRVTGKSRDDLQSVMALVRGGDLGQPFQFKNFRD</sequence>
<gene>
    <name evidence="3" type="primary">yajQ</name>
    <name evidence="6" type="ordered locus">STM0435</name>
</gene>
<reference key="1">
    <citation type="journal article" date="2001" name="Nature">
        <title>Complete genome sequence of Salmonella enterica serovar Typhimurium LT2.</title>
        <authorList>
            <person name="McClelland M."/>
            <person name="Sanderson K.E."/>
            <person name="Spieth J."/>
            <person name="Clifton S.W."/>
            <person name="Latreille P."/>
            <person name="Courtney L."/>
            <person name="Porwollik S."/>
            <person name="Ali J."/>
            <person name="Dante M."/>
            <person name="Du F."/>
            <person name="Hou S."/>
            <person name="Layman D."/>
            <person name="Leonard S."/>
            <person name="Nguyen C."/>
            <person name="Scott K."/>
            <person name="Holmes A."/>
            <person name="Grewal N."/>
            <person name="Mulvaney E."/>
            <person name="Ryan E."/>
            <person name="Sun H."/>
            <person name="Florea L."/>
            <person name="Miller W."/>
            <person name="Stoneking T."/>
            <person name="Nhan M."/>
            <person name="Waterston R."/>
            <person name="Wilson R.K."/>
        </authorList>
    </citation>
    <scope>NUCLEOTIDE SEQUENCE [LARGE SCALE GENOMIC DNA]</scope>
    <source>
        <strain>LT2 / SGSC1412 / ATCC 700720</strain>
    </source>
</reference>
<reference evidence="7 8" key="2">
    <citation type="journal article" date="2024" name="Virulence">
        <title>A c-di-GMP binding effector STM0435 modulates flagellar motility and pathogenicity in Salmonella.</title>
        <authorList>
            <person name="Dai Y."/>
            <person name="Liu R."/>
            <person name="Yue Y."/>
            <person name="Song N."/>
            <person name="Jia H."/>
            <person name="Ma Z."/>
            <person name="Gao X."/>
            <person name="Zhang M."/>
            <person name="Yuan X."/>
            <person name="Liu Q."/>
            <person name="Liu X."/>
            <person name="Li B."/>
            <person name="Wang W."/>
        </authorList>
    </citation>
    <scope>X-RAY CRYSTALLOGRAPHY (1.48 ANGSTROMS) OF APOPROTEIN AND IN COMPLEX WITH CYCLIC DI-GMP</scope>
    <scope>FUNCTION</scope>
    <scope>ACTIVITY REGULATION</scope>
    <scope>DOMAIN</scope>
    <scope>DISRUPTION PHENOTYPE</scope>
    <scope>MUTAGENESIS OF ARG-33 AND 137-ARG-ASP-138</scope>
    <source>
        <strain>14028s / SGSC 2262</strain>
    </source>
</reference>
<name>YAJQ_SALTY</name>
<comment type="function">
    <text evidence="2">Cyclic di-GMP effector that influences virulence by regulating flagellar synthesis (PubMed:38532247). Binds bis-(3',5')-cyclic diguanylate (cyclic di-GMP or c-di-GMP), an important bacterial second messenger that controls a wide range of cellular processes (PubMed:38532247). YajQ influences Salmonella pathogenicity by inhibiting the flagellar gene transcription, thereby allowing normal expression of the flagellum (PubMed:38532247). Cannot bind GMP (PubMed:38532247).</text>
</comment>
<comment type="activity regulation">
    <text evidence="2">Activity is regulated by cyclic di-GMP, which binds to YajQ and enhances the inhibitory effect of YajQ on flagellar synthesis, allowing Salmonella to survive in the host.</text>
</comment>
<comment type="domain">
    <text evidence="2">Composed of two domains with a four-stranded antiparallel beta-sheet flanked on one side by two alpha-helices.</text>
</comment>
<comment type="disruption phenotype">
    <text evidence="2">Deletion of the gene has no effect on the growth properties in LB medium (PubMed:38532247). The expression of about 40 flagellar genes, which belong to class I, class II and class III, is significantly increased in the mutant, resulting in high flagellum expression (PubMed:38532247). The mutant exhibits increased motility and higher pathogenicity (PubMed:38532247).</text>
</comment>
<comment type="similarity">
    <text evidence="1 5">Belongs to the YajQ family.</text>
</comment>
<comment type="sequence caution" evidence="4">
    <conflict type="erroneous initiation">
        <sequence resource="EMBL-CDS" id="AAL19389"/>
    </conflict>
    <text>Extended N-terminus.</text>
</comment>
<evidence type="ECO:0000255" key="1">
    <source>
        <dbReference type="HAMAP-Rule" id="MF_00632"/>
    </source>
</evidence>
<evidence type="ECO:0000269" key="2">
    <source>
    </source>
</evidence>
<evidence type="ECO:0000303" key="3">
    <source>
    </source>
</evidence>
<evidence type="ECO:0000305" key="4"/>
<evidence type="ECO:0000305" key="5">
    <source>
    </source>
</evidence>
<evidence type="ECO:0000312" key="6">
    <source>
        <dbReference type="EMBL" id="AAL19389.1"/>
    </source>
</evidence>
<evidence type="ECO:0007744" key="7">
    <source>
        <dbReference type="PDB" id="8K4I"/>
    </source>
</evidence>
<evidence type="ECO:0007744" key="8">
    <source>
        <dbReference type="PDB" id="8K5Q"/>
    </source>
</evidence>
<accession>Q8ZRC9</accession>
<feature type="chain" id="PRO_0000106198" description="Cyclic di-GMP-binding protein YajQ">
    <location>
        <begin position="1"/>
        <end position="163"/>
    </location>
</feature>
<feature type="binding site" evidence="2 8">
    <location>
        <position position="33"/>
    </location>
    <ligand>
        <name>3',3'-c-di-GMP</name>
        <dbReference type="ChEBI" id="CHEBI:58805"/>
        <label>1</label>
    </ligand>
</feature>
<feature type="binding site" evidence="2 8">
    <location>
        <position position="135"/>
    </location>
    <ligand>
        <name>3',3'-c-di-GMP</name>
        <dbReference type="ChEBI" id="CHEBI:58805"/>
        <label>2</label>
    </ligand>
</feature>
<feature type="binding site" evidence="2 8">
    <location>
        <position position="136"/>
    </location>
    <ligand>
        <name>3',3'-c-di-GMP</name>
        <dbReference type="ChEBI" id="CHEBI:58805"/>
        <label>2</label>
    </ligand>
</feature>
<feature type="binding site" evidence="2 8">
    <location>
        <position position="137"/>
    </location>
    <ligand>
        <name>3',3'-c-di-GMP</name>
        <dbReference type="ChEBI" id="CHEBI:58805"/>
        <label>2</label>
    </ligand>
</feature>
<feature type="binding site" evidence="2 8">
    <location>
        <position position="138"/>
    </location>
    <ligand>
        <name>3',3'-c-di-GMP</name>
        <dbReference type="ChEBI" id="CHEBI:58805"/>
        <label>2</label>
    </ligand>
</feature>
<feature type="binding site" evidence="2 8">
    <location>
        <position position="163"/>
    </location>
    <ligand>
        <name>3',3'-c-di-GMP</name>
        <dbReference type="ChEBI" id="CHEBI:58805"/>
        <label>2</label>
    </ligand>
</feature>
<feature type="mutagenesis site" description="Decreases cyclic di-GMP binding affinity." evidence="2">
    <original>R</original>
    <variation>H</variation>
    <location>
        <position position="33"/>
    </location>
</feature>
<feature type="mutagenesis site" description="Decreases cyclic di-GMP binding affinity." evidence="2">
    <original>RD</original>
    <variation>HH</variation>
    <location>
        <begin position="137"/>
        <end position="138"/>
    </location>
</feature>
<proteinExistence type="evidence at protein level"/>
<protein>
    <recommendedName>
        <fullName evidence="4">Cyclic di-GMP-binding protein YajQ</fullName>
    </recommendedName>
</protein>
<keyword id="KW-0002">3D-structure</keyword>
<keyword id="KW-0547">Nucleotide-binding</keyword>
<keyword id="KW-1185">Reference proteome</keyword>
<keyword id="KW-0843">Virulence</keyword>